<organism>
    <name type="scientific">Schizosaccharomyces pombe (strain 972 / ATCC 24843)</name>
    <name type="common">Fission yeast</name>
    <dbReference type="NCBI Taxonomy" id="284812"/>
    <lineage>
        <taxon>Eukaryota</taxon>
        <taxon>Fungi</taxon>
        <taxon>Dikarya</taxon>
        <taxon>Ascomycota</taxon>
        <taxon>Taphrinomycotina</taxon>
        <taxon>Schizosaccharomycetes</taxon>
        <taxon>Schizosaccharomycetales</taxon>
        <taxon>Schizosaccharomycetaceae</taxon>
        <taxon>Schizosaccharomyces</taxon>
    </lineage>
</organism>
<gene>
    <name evidence="3" type="primary">lys3</name>
    <name evidence="6" type="ORF">SPAC227.18</name>
    <name type="ORF">SPAC2F7.01</name>
</gene>
<feature type="chain" id="PRO_0000199014" description="Saccharopine dehydrogenase [NAD(+), L-lysine-forming]">
    <location>
        <begin position="1"/>
        <end position="368"/>
    </location>
</feature>
<feature type="active site" description="Proton acceptor" evidence="1">
    <location>
        <position position="77"/>
    </location>
</feature>
<feature type="active site" description="Proton donor" evidence="1">
    <location>
        <position position="96"/>
    </location>
</feature>
<feature type="binding site" evidence="1">
    <location>
        <position position="18"/>
    </location>
    <ligand>
        <name>L-saccharopine</name>
        <dbReference type="ChEBI" id="CHEBI:57951"/>
    </ligand>
</feature>
<feature type="binding site" evidence="1">
    <location>
        <position position="77"/>
    </location>
    <ligand>
        <name>L-saccharopine</name>
        <dbReference type="ChEBI" id="CHEBI:57951"/>
    </ligand>
</feature>
<feature type="binding site" evidence="1">
    <location>
        <position position="101"/>
    </location>
    <ligand>
        <name>L-saccharopine</name>
        <dbReference type="ChEBI" id="CHEBI:57951"/>
    </ligand>
</feature>
<feature type="binding site" evidence="1">
    <location>
        <position position="130"/>
    </location>
    <ligand>
        <name>NAD(+)</name>
        <dbReference type="ChEBI" id="CHEBI:57540"/>
    </ligand>
</feature>
<feature type="binding site" evidence="1">
    <location>
        <position position="131"/>
    </location>
    <ligand>
        <name>L-saccharopine</name>
        <dbReference type="ChEBI" id="CHEBI:57951"/>
    </ligand>
</feature>
<feature type="binding site" evidence="1">
    <location>
        <position position="135"/>
    </location>
    <ligand>
        <name>L-saccharopine</name>
        <dbReference type="ChEBI" id="CHEBI:57951"/>
    </ligand>
</feature>
<feature type="binding site" evidence="1">
    <location>
        <begin position="203"/>
        <end position="204"/>
    </location>
    <ligand>
        <name>NAD(+)</name>
        <dbReference type="ChEBI" id="CHEBI:57540"/>
    </ligand>
</feature>
<feature type="binding site" evidence="1">
    <location>
        <position position="227"/>
    </location>
    <ligand>
        <name>NAD(+)</name>
        <dbReference type="ChEBI" id="CHEBI:57540"/>
    </ligand>
</feature>
<feature type="binding site" evidence="1">
    <location>
        <position position="231"/>
    </location>
    <ligand>
        <name>NAD(+)</name>
        <dbReference type="ChEBI" id="CHEBI:57540"/>
    </ligand>
</feature>
<feature type="binding site" evidence="1">
    <location>
        <position position="251"/>
    </location>
    <ligand>
        <name>NAD(+)</name>
        <dbReference type="ChEBI" id="CHEBI:57540"/>
    </ligand>
</feature>
<feature type="binding site" evidence="1">
    <location>
        <position position="278"/>
    </location>
    <ligand>
        <name>NAD(+)</name>
        <dbReference type="ChEBI" id="CHEBI:57540"/>
    </ligand>
</feature>
<feature type="binding site" evidence="1">
    <location>
        <begin position="279"/>
        <end position="281"/>
    </location>
    <ligand>
        <name>L-saccharopine</name>
        <dbReference type="ChEBI" id="CHEBI:57951"/>
    </ligand>
</feature>
<feature type="binding site" evidence="1">
    <location>
        <begin position="319"/>
        <end position="322"/>
    </location>
    <ligand>
        <name>NAD(+)</name>
        <dbReference type="ChEBI" id="CHEBI:57540"/>
    </ligand>
</feature>
<feature type="modified residue" description="Phosphoserine" evidence="2">
    <location>
        <position position="85"/>
    </location>
</feature>
<feature type="disulfide bond" evidence="1">
    <location>
        <begin position="205"/>
        <end position="249"/>
    </location>
</feature>
<evidence type="ECO:0000250" key="1">
    <source>
        <dbReference type="UniProtKB" id="P38998"/>
    </source>
</evidence>
<evidence type="ECO:0000269" key="2">
    <source>
    </source>
</evidence>
<evidence type="ECO:0000303" key="3">
    <source>
    </source>
</evidence>
<evidence type="ECO:0000305" key="4"/>
<evidence type="ECO:0000305" key="5">
    <source>
    </source>
</evidence>
<evidence type="ECO:0000312" key="6">
    <source>
        <dbReference type="PomBase" id="SPAC227.18"/>
    </source>
</evidence>
<dbReference type="EC" id="1.5.1.7"/>
<dbReference type="EMBL" id="CU329670">
    <property type="protein sequence ID" value="CAB61467.1"/>
    <property type="molecule type" value="Genomic_DNA"/>
</dbReference>
<dbReference type="PIR" id="T38549">
    <property type="entry name" value="S58145"/>
</dbReference>
<dbReference type="PIR" id="T50174">
    <property type="entry name" value="T50174"/>
</dbReference>
<dbReference type="RefSeq" id="NP_592972.1">
    <property type="nucleotide sequence ID" value="NM_001018372.2"/>
</dbReference>
<dbReference type="SMR" id="Q09694"/>
<dbReference type="BioGRID" id="278002">
    <property type="interactions" value="38"/>
</dbReference>
<dbReference type="FunCoup" id="Q09694">
    <property type="interactions" value="437"/>
</dbReference>
<dbReference type="IntAct" id="Q09694">
    <property type="interactions" value="4"/>
</dbReference>
<dbReference type="MINT" id="Q09694"/>
<dbReference type="STRING" id="284812.Q09694"/>
<dbReference type="iPTMnet" id="Q09694"/>
<dbReference type="PaxDb" id="4896-SPAC227.18.1"/>
<dbReference type="EnsemblFungi" id="SPAC227.18.1">
    <property type="protein sequence ID" value="SPAC227.18.1:pep"/>
    <property type="gene ID" value="SPAC227.18"/>
</dbReference>
<dbReference type="GeneID" id="2541500"/>
<dbReference type="KEGG" id="spo:2541500"/>
<dbReference type="PomBase" id="SPAC227.18">
    <property type="gene designation" value="lys3"/>
</dbReference>
<dbReference type="VEuPathDB" id="FungiDB:SPAC227.18"/>
<dbReference type="eggNOG" id="KOG0172">
    <property type="taxonomic scope" value="Eukaryota"/>
</dbReference>
<dbReference type="HOGENOM" id="CLU_063085_0_0_1"/>
<dbReference type="InParanoid" id="Q09694"/>
<dbReference type="OMA" id="YFFFSHT"/>
<dbReference type="PhylomeDB" id="Q09694"/>
<dbReference type="UniPathway" id="UPA00033">
    <property type="reaction ID" value="UER00034"/>
</dbReference>
<dbReference type="PRO" id="PR:Q09694"/>
<dbReference type="Proteomes" id="UP000002485">
    <property type="component" value="Chromosome I"/>
</dbReference>
<dbReference type="GO" id="GO:0005737">
    <property type="term" value="C:cytoplasm"/>
    <property type="evidence" value="ECO:0007005"/>
    <property type="project" value="PomBase"/>
</dbReference>
<dbReference type="GO" id="GO:0004754">
    <property type="term" value="F:saccharopine dehydrogenase (NAD+, L-lysine-forming) activity"/>
    <property type="evidence" value="ECO:0000266"/>
    <property type="project" value="PomBase"/>
</dbReference>
<dbReference type="GO" id="GO:0004753">
    <property type="term" value="F:saccharopine dehydrogenase activity"/>
    <property type="evidence" value="ECO:0000318"/>
    <property type="project" value="GO_Central"/>
</dbReference>
<dbReference type="GO" id="GO:0019878">
    <property type="term" value="P:lysine biosynthetic process via aminoadipic acid"/>
    <property type="evidence" value="ECO:0000315"/>
    <property type="project" value="PomBase"/>
</dbReference>
<dbReference type="CDD" id="cd12188">
    <property type="entry name" value="SDH"/>
    <property type="match status" value="1"/>
</dbReference>
<dbReference type="FunFam" id="3.40.50.720:FF:000217">
    <property type="entry name" value="Saccharopine dehydrogenase [NAD(+), L-lysine-forming]"/>
    <property type="match status" value="1"/>
</dbReference>
<dbReference type="FunFam" id="3.40.50.720:FF:000423">
    <property type="entry name" value="Saccharopine dehydrogenase [NAD(+), L-lysine-forming]"/>
    <property type="match status" value="1"/>
</dbReference>
<dbReference type="Gene3D" id="3.40.50.720">
    <property type="entry name" value="NAD(P)-binding Rossmann-like Domain"/>
    <property type="match status" value="2"/>
</dbReference>
<dbReference type="InterPro" id="IPR051168">
    <property type="entry name" value="AASS"/>
</dbReference>
<dbReference type="InterPro" id="IPR007886">
    <property type="entry name" value="AlaDH/PNT_N"/>
</dbReference>
<dbReference type="InterPro" id="IPR007698">
    <property type="entry name" value="AlaDH/PNT_NAD(H)-bd"/>
</dbReference>
<dbReference type="InterPro" id="IPR027281">
    <property type="entry name" value="Lys1"/>
</dbReference>
<dbReference type="InterPro" id="IPR036291">
    <property type="entry name" value="NAD(P)-bd_dom_sf"/>
</dbReference>
<dbReference type="PANTHER" id="PTHR11133">
    <property type="entry name" value="SACCHAROPINE DEHYDROGENASE"/>
    <property type="match status" value="1"/>
</dbReference>
<dbReference type="PANTHER" id="PTHR11133:SF23">
    <property type="entry name" value="SACCHAROPINE DEHYDROGENASE [NAD(+), L-LYSINE-FORMING]"/>
    <property type="match status" value="1"/>
</dbReference>
<dbReference type="Pfam" id="PF05222">
    <property type="entry name" value="AlaDh_PNT_N"/>
    <property type="match status" value="1"/>
</dbReference>
<dbReference type="PIRSF" id="PIRSF018250">
    <property type="entry name" value="Saccharopine_DH_Lys"/>
    <property type="match status" value="1"/>
</dbReference>
<dbReference type="SMART" id="SM01002">
    <property type="entry name" value="AlaDh_PNT_C"/>
    <property type="match status" value="1"/>
</dbReference>
<dbReference type="SMART" id="SM01003">
    <property type="entry name" value="AlaDh_PNT_N"/>
    <property type="match status" value="1"/>
</dbReference>
<dbReference type="SUPFAM" id="SSF52283">
    <property type="entry name" value="Formate/glycerate dehydrogenase catalytic domain-like"/>
    <property type="match status" value="1"/>
</dbReference>
<dbReference type="SUPFAM" id="SSF51735">
    <property type="entry name" value="NAD(P)-binding Rossmann-fold domains"/>
    <property type="match status" value="1"/>
</dbReference>
<keyword id="KW-0028">Amino-acid biosynthesis</keyword>
<keyword id="KW-1015">Disulfide bond</keyword>
<keyword id="KW-0457">Lysine biosynthesis</keyword>
<keyword id="KW-0520">NAD</keyword>
<keyword id="KW-0560">Oxidoreductase</keyword>
<keyword id="KW-0597">Phosphoprotein</keyword>
<keyword id="KW-1185">Reference proteome</keyword>
<accession>Q09694</accession>
<accession>Q9UTC1</accession>
<reference key="1">
    <citation type="journal article" date="2002" name="Nature">
        <title>The genome sequence of Schizosaccharomyces pombe.</title>
        <authorList>
            <person name="Wood V."/>
            <person name="Gwilliam R."/>
            <person name="Rajandream M.A."/>
            <person name="Lyne M.H."/>
            <person name="Lyne R."/>
            <person name="Stewart A."/>
            <person name="Sgouros J.G."/>
            <person name="Peat N."/>
            <person name="Hayles J."/>
            <person name="Baker S.G."/>
            <person name="Basham D."/>
            <person name="Bowman S."/>
            <person name="Brooks K."/>
            <person name="Brown D."/>
            <person name="Brown S."/>
            <person name="Chillingworth T."/>
            <person name="Churcher C.M."/>
            <person name="Collins M."/>
            <person name="Connor R."/>
            <person name="Cronin A."/>
            <person name="Davis P."/>
            <person name="Feltwell T."/>
            <person name="Fraser A."/>
            <person name="Gentles S."/>
            <person name="Goble A."/>
            <person name="Hamlin N."/>
            <person name="Harris D.E."/>
            <person name="Hidalgo J."/>
            <person name="Hodgson G."/>
            <person name="Holroyd S."/>
            <person name="Hornsby T."/>
            <person name="Howarth S."/>
            <person name="Huckle E.J."/>
            <person name="Hunt S."/>
            <person name="Jagels K."/>
            <person name="James K.D."/>
            <person name="Jones L."/>
            <person name="Jones M."/>
            <person name="Leather S."/>
            <person name="McDonald S."/>
            <person name="McLean J."/>
            <person name="Mooney P."/>
            <person name="Moule S."/>
            <person name="Mungall K.L."/>
            <person name="Murphy L.D."/>
            <person name="Niblett D."/>
            <person name="Odell C."/>
            <person name="Oliver K."/>
            <person name="O'Neil S."/>
            <person name="Pearson D."/>
            <person name="Quail M.A."/>
            <person name="Rabbinowitsch E."/>
            <person name="Rutherford K.M."/>
            <person name="Rutter S."/>
            <person name="Saunders D."/>
            <person name="Seeger K."/>
            <person name="Sharp S."/>
            <person name="Skelton J."/>
            <person name="Simmonds M.N."/>
            <person name="Squares R."/>
            <person name="Squares S."/>
            <person name="Stevens K."/>
            <person name="Taylor K."/>
            <person name="Taylor R.G."/>
            <person name="Tivey A."/>
            <person name="Walsh S.V."/>
            <person name="Warren T."/>
            <person name="Whitehead S."/>
            <person name="Woodward J.R."/>
            <person name="Volckaert G."/>
            <person name="Aert R."/>
            <person name="Robben J."/>
            <person name="Grymonprez B."/>
            <person name="Weltjens I."/>
            <person name="Vanstreels E."/>
            <person name="Rieger M."/>
            <person name="Schaefer M."/>
            <person name="Mueller-Auer S."/>
            <person name="Gabel C."/>
            <person name="Fuchs M."/>
            <person name="Duesterhoeft A."/>
            <person name="Fritzc C."/>
            <person name="Holzer E."/>
            <person name="Moestl D."/>
            <person name="Hilbert H."/>
            <person name="Borzym K."/>
            <person name="Langer I."/>
            <person name="Beck A."/>
            <person name="Lehrach H."/>
            <person name="Reinhardt R."/>
            <person name="Pohl T.M."/>
            <person name="Eger P."/>
            <person name="Zimmermann W."/>
            <person name="Wedler H."/>
            <person name="Wambutt R."/>
            <person name="Purnelle B."/>
            <person name="Goffeau A."/>
            <person name="Cadieu E."/>
            <person name="Dreano S."/>
            <person name="Gloux S."/>
            <person name="Lelaure V."/>
            <person name="Mottier S."/>
            <person name="Galibert F."/>
            <person name="Aves S.J."/>
            <person name="Xiang Z."/>
            <person name="Hunt C."/>
            <person name="Moore K."/>
            <person name="Hurst S.M."/>
            <person name="Lucas M."/>
            <person name="Rochet M."/>
            <person name="Gaillardin C."/>
            <person name="Tallada V.A."/>
            <person name="Garzon A."/>
            <person name="Thode G."/>
            <person name="Daga R.R."/>
            <person name="Cruzado L."/>
            <person name="Jimenez J."/>
            <person name="Sanchez M."/>
            <person name="del Rey F."/>
            <person name="Benito J."/>
            <person name="Dominguez A."/>
            <person name="Revuelta J.L."/>
            <person name="Moreno S."/>
            <person name="Armstrong J."/>
            <person name="Forsburg S.L."/>
            <person name="Cerutti L."/>
            <person name="Lowe T."/>
            <person name="McCombie W.R."/>
            <person name="Paulsen I."/>
            <person name="Potashkin J."/>
            <person name="Shpakovski G.V."/>
            <person name="Ussery D."/>
            <person name="Barrell B.G."/>
            <person name="Nurse P."/>
        </authorList>
    </citation>
    <scope>NUCLEOTIDE SEQUENCE [LARGE SCALE GENOMIC DNA]</scope>
    <source>
        <strain>972 / ATCC 24843</strain>
    </source>
</reference>
<reference key="2">
    <citation type="journal article" date="1988" name="J. Bacteriol.">
        <title>Lysine biosynthesis pathway and biochemical blocks of lysine auxotrophs of Schizosaccharomyces pombe.</title>
        <authorList>
            <person name="Ye Z.H."/>
            <person name="Bhattacharjee J.K."/>
        </authorList>
    </citation>
    <scope>FUNCTION</scope>
    <scope>PATHWAY</scope>
</reference>
<reference key="3">
    <citation type="journal article" date="2008" name="J. Proteome Res.">
        <title>Phosphoproteome analysis of fission yeast.</title>
        <authorList>
            <person name="Wilson-Grady J.T."/>
            <person name="Villen J."/>
            <person name="Gygi S.P."/>
        </authorList>
    </citation>
    <scope>PHOSPHORYLATION [LARGE SCALE ANALYSIS] AT SER-85</scope>
    <scope>IDENTIFICATION BY MASS SPECTROMETRY</scope>
</reference>
<comment type="function">
    <text evidence="1">Catalyzes the NAD(+)-dependent cleavage of saccharopine to L-lysine and 2-oxoglutarate, the final step in the alpha-aminoadipate (AAA) pathway for lysin biosynthesis.</text>
</comment>
<comment type="catalytic activity">
    <reaction evidence="1">
        <text>L-saccharopine + NAD(+) + H2O = L-lysine + 2-oxoglutarate + NADH + H(+)</text>
        <dbReference type="Rhea" id="RHEA:12440"/>
        <dbReference type="ChEBI" id="CHEBI:15377"/>
        <dbReference type="ChEBI" id="CHEBI:15378"/>
        <dbReference type="ChEBI" id="CHEBI:16810"/>
        <dbReference type="ChEBI" id="CHEBI:32551"/>
        <dbReference type="ChEBI" id="CHEBI:57540"/>
        <dbReference type="ChEBI" id="CHEBI:57945"/>
        <dbReference type="ChEBI" id="CHEBI:57951"/>
        <dbReference type="EC" id="1.5.1.7"/>
    </reaction>
</comment>
<comment type="pathway">
    <text evidence="5">Amino-acid biosynthesis; L-lysine biosynthesis via AAA pathway; L-lysine from L-alpha-aminoadipate (fungal route): step 3/3.</text>
</comment>
<comment type="subunit">
    <text evidence="1">Monomer.</text>
</comment>
<comment type="similarity">
    <text evidence="4">Belongs to the AlaDH/PNT family.</text>
</comment>
<protein>
    <recommendedName>
        <fullName>Saccharopine dehydrogenase [NAD(+), L-lysine-forming]</fullName>
        <shortName>SDH</shortName>
        <ecNumber>1.5.1.7</ecNumber>
    </recommendedName>
    <alternativeName>
        <fullName>Lysine--2-oxoglutarate reductase</fullName>
    </alternativeName>
</protein>
<name>LYS1_SCHPO</name>
<proteinExistence type="evidence at protein level"/>
<sequence length="368" mass="41393">MVAPHLWLRAETKPLEERSALTPRTAKILADAGFQITIERSSQRAFKDKEFERLGFPMVPEGSWRHAPKDAYIIGLKELPENDNSPLKHTHIQFAHCYKNQEGWREVLSRFPAGNGLLYDLEFLQDDNGRRVAAFGYHAGFAGSAISCLVWAHQLLHPNKQFPAIRPFPNEKSLVRHVARQVRLALKKNNNQYPRILVIGALGRCGTGACDLASKIGIPFDNILRWDINETKKGGPFTEITESDIFVNCIYLSMPIPKFCTVESLNVPNRKLRVVCDVSCDTTNPNNPIPIYNVNTTFDHPTVEVKGVTTPPPLEVISIDHLPTLLPRESSEAFSEALIPSLLALKDVDNAPVWVRAKKLYETMVQKL</sequence>